<feature type="chain" id="PRO_0000093601" description="Short neurotoxin 2" evidence="3">
    <location>
        <begin position="1"/>
        <end position="61"/>
    </location>
</feature>
<feature type="disulfide bond" evidence="1">
    <location>
        <begin position="3"/>
        <end position="23"/>
    </location>
</feature>
<feature type="disulfide bond" evidence="1">
    <location>
        <begin position="17"/>
        <end position="40"/>
    </location>
</feature>
<feature type="disulfide bond" evidence="1">
    <location>
        <begin position="42"/>
        <end position="53"/>
    </location>
</feature>
<feature type="disulfide bond" evidence="1">
    <location>
        <begin position="54"/>
        <end position="59"/>
    </location>
</feature>
<accession>P25675</accession>
<keyword id="KW-0008">Acetylcholine receptor inhibiting toxin</keyword>
<keyword id="KW-0903">Direct protein sequencing</keyword>
<keyword id="KW-1015">Disulfide bond</keyword>
<keyword id="KW-0872">Ion channel impairing toxin</keyword>
<keyword id="KW-0528">Neurotoxin</keyword>
<keyword id="KW-0629">Postsynaptic neurotoxin</keyword>
<keyword id="KW-0964">Secreted</keyword>
<keyword id="KW-0800">Toxin</keyword>
<comment type="function">
    <text evidence="2">Binds to muscle nicotinic acetylcholine receptor (nAChR) and inhibit acetylcholine from binding to the receptor, thereby impairing neuromuscular transmission.</text>
</comment>
<comment type="subcellular location">
    <subcellularLocation>
        <location evidence="3">Secreted</location>
    </subcellularLocation>
</comment>
<comment type="tissue specificity">
    <text evidence="4">Expressed by the venom gland.</text>
</comment>
<comment type="toxic dose">
    <text evidence="3">LD(50) is 0.08 mg/kg by intravenous injection.</text>
</comment>
<comment type="similarity">
    <text evidence="4">Belongs to the three-finger toxin family. Short-chain subfamily. Type I alpha-neurotoxin sub-subfamily.</text>
</comment>
<protein>
    <recommendedName>
        <fullName>Short neurotoxin 2</fullName>
    </recommendedName>
    <alternativeName>
        <fullName>Toxin CM-10a</fullName>
    </alternativeName>
</protein>
<proteinExistence type="evidence at protein level"/>
<name>3S12_NAJHH</name>
<dbReference type="SMR" id="P25675"/>
<dbReference type="GO" id="GO:0005576">
    <property type="term" value="C:extracellular region"/>
    <property type="evidence" value="ECO:0007669"/>
    <property type="project" value="UniProtKB-SubCell"/>
</dbReference>
<dbReference type="GO" id="GO:0030550">
    <property type="term" value="F:acetylcholine receptor inhibitor activity"/>
    <property type="evidence" value="ECO:0007669"/>
    <property type="project" value="UniProtKB-KW"/>
</dbReference>
<dbReference type="GO" id="GO:0099106">
    <property type="term" value="F:ion channel regulator activity"/>
    <property type="evidence" value="ECO:0007669"/>
    <property type="project" value="UniProtKB-KW"/>
</dbReference>
<dbReference type="GO" id="GO:0090729">
    <property type="term" value="F:toxin activity"/>
    <property type="evidence" value="ECO:0007669"/>
    <property type="project" value="UniProtKB-KW"/>
</dbReference>
<dbReference type="CDD" id="cd00206">
    <property type="entry name" value="TFP_snake_toxin"/>
    <property type="match status" value="1"/>
</dbReference>
<dbReference type="FunFam" id="2.10.60.10:FF:000024">
    <property type="entry name" value="Cytotoxin 1"/>
    <property type="match status" value="1"/>
</dbReference>
<dbReference type="Gene3D" id="2.10.60.10">
    <property type="entry name" value="CD59"/>
    <property type="match status" value="1"/>
</dbReference>
<dbReference type="InterPro" id="IPR003571">
    <property type="entry name" value="Snake_3FTx"/>
</dbReference>
<dbReference type="InterPro" id="IPR045860">
    <property type="entry name" value="Snake_toxin-like_sf"/>
</dbReference>
<dbReference type="InterPro" id="IPR018354">
    <property type="entry name" value="Snake_toxin_con_site"/>
</dbReference>
<dbReference type="InterPro" id="IPR054131">
    <property type="entry name" value="Toxin_cobra-type"/>
</dbReference>
<dbReference type="Pfam" id="PF21947">
    <property type="entry name" value="Toxin_cobra-type"/>
    <property type="match status" value="1"/>
</dbReference>
<dbReference type="SUPFAM" id="SSF57302">
    <property type="entry name" value="Snake toxin-like"/>
    <property type="match status" value="1"/>
</dbReference>
<dbReference type="PROSITE" id="PS00272">
    <property type="entry name" value="SNAKE_TOXIN"/>
    <property type="match status" value="1"/>
</dbReference>
<organism>
    <name type="scientific">Naja haje haje</name>
    <name type="common">Egyptian cobra</name>
    <dbReference type="NCBI Taxonomy" id="8642"/>
    <lineage>
        <taxon>Eukaryota</taxon>
        <taxon>Metazoa</taxon>
        <taxon>Chordata</taxon>
        <taxon>Craniata</taxon>
        <taxon>Vertebrata</taxon>
        <taxon>Euteleostomi</taxon>
        <taxon>Lepidosauria</taxon>
        <taxon>Squamata</taxon>
        <taxon>Bifurcata</taxon>
        <taxon>Unidentata</taxon>
        <taxon>Episquamata</taxon>
        <taxon>Toxicofera</taxon>
        <taxon>Serpentes</taxon>
        <taxon>Colubroidea</taxon>
        <taxon>Elapidae</taxon>
        <taxon>Elapinae</taxon>
        <taxon>Naja</taxon>
    </lineage>
</organism>
<evidence type="ECO:0000250" key="1">
    <source>
        <dbReference type="UniProtKB" id="P0C1Z0"/>
    </source>
</evidence>
<evidence type="ECO:0000250" key="2">
    <source>
        <dbReference type="UniProtKB" id="P60775"/>
    </source>
</evidence>
<evidence type="ECO:0000269" key="3">
    <source>
    </source>
</evidence>
<evidence type="ECO:0000305" key="4"/>
<sequence length="61" mass="6888">MICHNQQSSQPPTIKTCPGETNCYKKQWRDHRGTIIERGCGCPSVKKGVGIYCCKTDKCNR</sequence>
<reference key="1">
    <citation type="journal article" date="1978" name="Biochim. Biophys. Acta">
        <title>Purification, some properties and the primary structures of three reduced and S-carboxymethylated toxins (CM-5, CM-6 and CM-10a) from Naja haje haje (Egyptian cobra) venom.</title>
        <authorList>
            <person name="Joubert F.J."/>
            <person name="Taljaard N."/>
        </authorList>
    </citation>
    <scope>PROTEIN SEQUENCE</scope>
    <scope>TOXIC DOSE</scope>
    <scope>SUBCELLULAR LOCATION</scope>
    <source>
        <tissue>Venom</tissue>
    </source>
</reference>